<keyword id="KW-0067">ATP-binding</keyword>
<keyword id="KW-0963">Cytoplasm</keyword>
<keyword id="KW-0227">DNA damage</keyword>
<keyword id="KW-0228">DNA excision</keyword>
<keyword id="KW-0234">DNA repair</keyword>
<keyword id="KW-0267">Excision nuclease</keyword>
<keyword id="KW-0347">Helicase</keyword>
<keyword id="KW-0378">Hydrolase</keyword>
<keyword id="KW-0547">Nucleotide-binding</keyword>
<keyword id="KW-0742">SOS response</keyword>
<gene>
    <name evidence="1" type="primary">uvrB</name>
    <name type="ordered locus">AAur_2071</name>
</gene>
<sequence>MSLAQEINRVVAPFEVISEFKPAGDQPTAIAELTERINNGEKDVVLLGATGTGKSATTAWLIEQVQRPTLVMVQNKTLAAQLANEFRELLPNNAVEYFVSYYDYYQPEAYVAQTDTFIEKDSSINEEVERLRHSATNALLTRRDVIVVATVSCIYGLGTPEEYIAGMVTLRKGAEMNRDHLLRKFVSMQYARNDMDFHRGTFRVRGDTVEIIPMYEELAIRIEFFGDEIENIQTLHPLTGEVLRDEEEMYVFPASHYVAGPERMARAIKRIEDELADRLKVLEGQNKLVEAQRLRMRTTYDLEMMQQMGFCNGIENYSVHIDGRNPGTAPHCLIDYFPDDFLLVVDESHVTIPQIGAMYEGDMSRKRNLVDFGFRLPSAMDNRPLKWDEFLERIGQTVYLSATPGKYELGKADGYVQQIIRPTGLIDPEVVVKPTKGQIDDLLGEIRTRTEKNERVLVTTLTKRMAEDLTDYLVGHGVKVEYLHSDVDTLRRVELLRELRMGVFDVLVGINLLREGLDLPEVSLVSILDADKEGFLRSSTSLIQTIGRAARNVSGQVHMYADRITDSMAHAIEETNRRRAIQVQYNTDHGIDPQPLRKKIADITDQLAKEDADTQELLNNNRLAKGGKRGKSAAKGAATVRQDGLAAAPAEDLVGLIEQLTEQMHGAAAELQFEVAARIRDEVKELKRELRQMQSAGHA</sequence>
<comment type="function">
    <text evidence="1">The UvrABC repair system catalyzes the recognition and processing of DNA lesions. A damage recognition complex composed of 2 UvrA and 2 UvrB subunits scans DNA for abnormalities. Upon binding of the UvrA(2)B(2) complex to a putative damaged site, the DNA wraps around one UvrB monomer. DNA wrap is dependent on ATP binding by UvrB and probably causes local melting of the DNA helix, facilitating insertion of UvrB beta-hairpin between the DNA strands. Then UvrB probes one DNA strand for the presence of a lesion. If a lesion is found the UvrA subunits dissociate and the UvrB-DNA preincision complex is formed. This complex is subsequently bound by UvrC and the second UvrB is released. If no lesion is found, the DNA wraps around the other UvrB subunit that will check the other stand for damage.</text>
</comment>
<comment type="subunit">
    <text evidence="1">Forms a heterotetramer with UvrA during the search for lesions. Interacts with UvrC in an incision complex.</text>
</comment>
<comment type="subcellular location">
    <subcellularLocation>
        <location evidence="1">Cytoplasm</location>
    </subcellularLocation>
</comment>
<comment type="domain">
    <text evidence="1">The beta-hairpin motif is involved in DNA binding.</text>
</comment>
<comment type="similarity">
    <text evidence="1">Belongs to the UvrB family.</text>
</comment>
<protein>
    <recommendedName>
        <fullName evidence="1">UvrABC system protein B</fullName>
        <shortName evidence="1">Protein UvrB</shortName>
    </recommendedName>
    <alternativeName>
        <fullName evidence="1">Excinuclease ABC subunit B</fullName>
    </alternativeName>
</protein>
<organism>
    <name type="scientific">Paenarthrobacter aurescens (strain TC1)</name>
    <dbReference type="NCBI Taxonomy" id="290340"/>
    <lineage>
        <taxon>Bacteria</taxon>
        <taxon>Bacillati</taxon>
        <taxon>Actinomycetota</taxon>
        <taxon>Actinomycetes</taxon>
        <taxon>Micrococcales</taxon>
        <taxon>Micrococcaceae</taxon>
        <taxon>Paenarthrobacter</taxon>
    </lineage>
</organism>
<dbReference type="EMBL" id="CP000474">
    <property type="protein sequence ID" value="ABM07099.1"/>
    <property type="molecule type" value="Genomic_DNA"/>
</dbReference>
<dbReference type="RefSeq" id="WP_011774759.1">
    <property type="nucleotide sequence ID" value="NC_008711.1"/>
</dbReference>
<dbReference type="SMR" id="A1R6F3"/>
<dbReference type="STRING" id="290340.AAur_2071"/>
<dbReference type="KEGG" id="aau:AAur_2071"/>
<dbReference type="eggNOG" id="COG0556">
    <property type="taxonomic scope" value="Bacteria"/>
</dbReference>
<dbReference type="HOGENOM" id="CLU_009621_2_1_11"/>
<dbReference type="OrthoDB" id="9806651at2"/>
<dbReference type="Proteomes" id="UP000000637">
    <property type="component" value="Chromosome"/>
</dbReference>
<dbReference type="GO" id="GO:0005737">
    <property type="term" value="C:cytoplasm"/>
    <property type="evidence" value="ECO:0007669"/>
    <property type="project" value="UniProtKB-SubCell"/>
</dbReference>
<dbReference type="GO" id="GO:0009380">
    <property type="term" value="C:excinuclease repair complex"/>
    <property type="evidence" value="ECO:0007669"/>
    <property type="project" value="InterPro"/>
</dbReference>
<dbReference type="GO" id="GO:0005524">
    <property type="term" value="F:ATP binding"/>
    <property type="evidence" value="ECO:0007669"/>
    <property type="project" value="UniProtKB-UniRule"/>
</dbReference>
<dbReference type="GO" id="GO:0016887">
    <property type="term" value="F:ATP hydrolysis activity"/>
    <property type="evidence" value="ECO:0007669"/>
    <property type="project" value="InterPro"/>
</dbReference>
<dbReference type="GO" id="GO:0003677">
    <property type="term" value="F:DNA binding"/>
    <property type="evidence" value="ECO:0007669"/>
    <property type="project" value="UniProtKB-UniRule"/>
</dbReference>
<dbReference type="GO" id="GO:0009381">
    <property type="term" value="F:excinuclease ABC activity"/>
    <property type="evidence" value="ECO:0007669"/>
    <property type="project" value="UniProtKB-UniRule"/>
</dbReference>
<dbReference type="GO" id="GO:0004386">
    <property type="term" value="F:helicase activity"/>
    <property type="evidence" value="ECO:0007669"/>
    <property type="project" value="UniProtKB-KW"/>
</dbReference>
<dbReference type="GO" id="GO:0006289">
    <property type="term" value="P:nucleotide-excision repair"/>
    <property type="evidence" value="ECO:0007669"/>
    <property type="project" value="UniProtKB-UniRule"/>
</dbReference>
<dbReference type="GO" id="GO:0009432">
    <property type="term" value="P:SOS response"/>
    <property type="evidence" value="ECO:0007669"/>
    <property type="project" value="UniProtKB-UniRule"/>
</dbReference>
<dbReference type="CDD" id="cd17916">
    <property type="entry name" value="DEXHc_UvrB"/>
    <property type="match status" value="1"/>
</dbReference>
<dbReference type="CDD" id="cd18790">
    <property type="entry name" value="SF2_C_UvrB"/>
    <property type="match status" value="1"/>
</dbReference>
<dbReference type="Gene3D" id="3.40.50.300">
    <property type="entry name" value="P-loop containing nucleotide triphosphate hydrolases"/>
    <property type="match status" value="3"/>
</dbReference>
<dbReference type="Gene3D" id="4.10.860.10">
    <property type="entry name" value="UVR domain"/>
    <property type="match status" value="1"/>
</dbReference>
<dbReference type="HAMAP" id="MF_00204">
    <property type="entry name" value="UvrB"/>
    <property type="match status" value="1"/>
</dbReference>
<dbReference type="InterPro" id="IPR006935">
    <property type="entry name" value="Helicase/UvrB_N"/>
</dbReference>
<dbReference type="InterPro" id="IPR014001">
    <property type="entry name" value="Helicase_ATP-bd"/>
</dbReference>
<dbReference type="InterPro" id="IPR001650">
    <property type="entry name" value="Helicase_C-like"/>
</dbReference>
<dbReference type="InterPro" id="IPR027417">
    <property type="entry name" value="P-loop_NTPase"/>
</dbReference>
<dbReference type="InterPro" id="IPR001943">
    <property type="entry name" value="UVR_dom"/>
</dbReference>
<dbReference type="InterPro" id="IPR036876">
    <property type="entry name" value="UVR_dom_sf"/>
</dbReference>
<dbReference type="InterPro" id="IPR004807">
    <property type="entry name" value="UvrB"/>
</dbReference>
<dbReference type="InterPro" id="IPR041471">
    <property type="entry name" value="UvrB_inter"/>
</dbReference>
<dbReference type="InterPro" id="IPR024759">
    <property type="entry name" value="UvrB_YAD/RRR_dom"/>
</dbReference>
<dbReference type="NCBIfam" id="NF003673">
    <property type="entry name" value="PRK05298.1"/>
    <property type="match status" value="1"/>
</dbReference>
<dbReference type="NCBIfam" id="TIGR00631">
    <property type="entry name" value="uvrb"/>
    <property type="match status" value="1"/>
</dbReference>
<dbReference type="PANTHER" id="PTHR24029">
    <property type="entry name" value="UVRABC SYSTEM PROTEIN B"/>
    <property type="match status" value="1"/>
</dbReference>
<dbReference type="PANTHER" id="PTHR24029:SF0">
    <property type="entry name" value="UVRABC SYSTEM PROTEIN B"/>
    <property type="match status" value="1"/>
</dbReference>
<dbReference type="Pfam" id="PF00271">
    <property type="entry name" value="Helicase_C"/>
    <property type="match status" value="1"/>
</dbReference>
<dbReference type="Pfam" id="PF04851">
    <property type="entry name" value="ResIII"/>
    <property type="match status" value="1"/>
</dbReference>
<dbReference type="Pfam" id="PF02151">
    <property type="entry name" value="UVR"/>
    <property type="match status" value="1"/>
</dbReference>
<dbReference type="Pfam" id="PF12344">
    <property type="entry name" value="UvrB"/>
    <property type="match status" value="1"/>
</dbReference>
<dbReference type="Pfam" id="PF17757">
    <property type="entry name" value="UvrB_inter"/>
    <property type="match status" value="1"/>
</dbReference>
<dbReference type="SMART" id="SM00487">
    <property type="entry name" value="DEXDc"/>
    <property type="match status" value="1"/>
</dbReference>
<dbReference type="SMART" id="SM00490">
    <property type="entry name" value="HELICc"/>
    <property type="match status" value="1"/>
</dbReference>
<dbReference type="SUPFAM" id="SSF46600">
    <property type="entry name" value="C-terminal UvrC-binding domain of UvrB"/>
    <property type="match status" value="1"/>
</dbReference>
<dbReference type="SUPFAM" id="SSF52540">
    <property type="entry name" value="P-loop containing nucleoside triphosphate hydrolases"/>
    <property type="match status" value="2"/>
</dbReference>
<dbReference type="PROSITE" id="PS51192">
    <property type="entry name" value="HELICASE_ATP_BIND_1"/>
    <property type="match status" value="1"/>
</dbReference>
<dbReference type="PROSITE" id="PS51194">
    <property type="entry name" value="HELICASE_CTER"/>
    <property type="match status" value="1"/>
</dbReference>
<dbReference type="PROSITE" id="PS50151">
    <property type="entry name" value="UVR"/>
    <property type="match status" value="1"/>
</dbReference>
<proteinExistence type="inferred from homology"/>
<reference key="1">
    <citation type="journal article" date="2006" name="PLoS Genet.">
        <title>Secrets of soil survival revealed by the genome sequence of Arthrobacter aurescens TC1.</title>
        <authorList>
            <person name="Mongodin E.F."/>
            <person name="Shapir N."/>
            <person name="Daugherty S.C."/>
            <person name="DeBoy R.T."/>
            <person name="Emerson J.B."/>
            <person name="Shvartzbeyn A."/>
            <person name="Radune D."/>
            <person name="Vamathevan J."/>
            <person name="Riggs F."/>
            <person name="Grinberg V."/>
            <person name="Khouri H.M."/>
            <person name="Wackett L.P."/>
            <person name="Nelson K.E."/>
            <person name="Sadowsky M.J."/>
        </authorList>
    </citation>
    <scope>NUCLEOTIDE SEQUENCE [LARGE SCALE GENOMIC DNA]</scope>
    <source>
        <strain>TC1</strain>
    </source>
</reference>
<feature type="chain" id="PRO_1000077864" description="UvrABC system protein B">
    <location>
        <begin position="1"/>
        <end position="699"/>
    </location>
</feature>
<feature type="domain" description="Helicase ATP-binding" evidence="1">
    <location>
        <begin position="35"/>
        <end position="188"/>
    </location>
</feature>
<feature type="domain" description="Helicase C-terminal" evidence="1">
    <location>
        <begin position="438"/>
        <end position="604"/>
    </location>
</feature>
<feature type="domain" description="UVR" evidence="1">
    <location>
        <begin position="654"/>
        <end position="689"/>
    </location>
</feature>
<feature type="short sequence motif" description="Beta-hairpin">
    <location>
        <begin position="101"/>
        <end position="124"/>
    </location>
</feature>
<feature type="binding site" evidence="1">
    <location>
        <begin position="48"/>
        <end position="55"/>
    </location>
    <ligand>
        <name>ATP</name>
        <dbReference type="ChEBI" id="CHEBI:30616"/>
    </ligand>
</feature>
<name>UVRB_PAEAT</name>
<accession>A1R6F3</accession>
<evidence type="ECO:0000255" key="1">
    <source>
        <dbReference type="HAMAP-Rule" id="MF_00204"/>
    </source>
</evidence>